<protein>
    <recommendedName>
        <fullName evidence="1">Crossover junction endodeoxyribonuclease RuvC</fullName>
        <ecNumber evidence="1">3.1.21.10</ecNumber>
    </recommendedName>
    <alternativeName>
        <fullName evidence="1">Holliday junction nuclease RuvC</fullName>
    </alternativeName>
    <alternativeName>
        <fullName evidence="1">Holliday junction resolvase RuvC</fullName>
    </alternativeName>
</protein>
<dbReference type="EC" id="3.1.21.10" evidence="1"/>
<dbReference type="EMBL" id="CP000926">
    <property type="protein sequence ID" value="ABZ00092.1"/>
    <property type="molecule type" value="Genomic_DNA"/>
</dbReference>
<dbReference type="RefSeq" id="WP_012273769.1">
    <property type="nucleotide sequence ID" value="NC_010322.1"/>
</dbReference>
<dbReference type="SMR" id="B0KTJ4"/>
<dbReference type="KEGG" id="ppg:PputGB1_4203"/>
<dbReference type="eggNOG" id="COG0817">
    <property type="taxonomic scope" value="Bacteria"/>
</dbReference>
<dbReference type="HOGENOM" id="CLU_091257_2_1_6"/>
<dbReference type="Proteomes" id="UP000002157">
    <property type="component" value="Chromosome"/>
</dbReference>
<dbReference type="GO" id="GO:0005737">
    <property type="term" value="C:cytoplasm"/>
    <property type="evidence" value="ECO:0007669"/>
    <property type="project" value="UniProtKB-SubCell"/>
</dbReference>
<dbReference type="GO" id="GO:0048476">
    <property type="term" value="C:Holliday junction resolvase complex"/>
    <property type="evidence" value="ECO:0007669"/>
    <property type="project" value="UniProtKB-UniRule"/>
</dbReference>
<dbReference type="GO" id="GO:0008821">
    <property type="term" value="F:crossover junction DNA endonuclease activity"/>
    <property type="evidence" value="ECO:0007669"/>
    <property type="project" value="UniProtKB-UniRule"/>
</dbReference>
<dbReference type="GO" id="GO:0003677">
    <property type="term" value="F:DNA binding"/>
    <property type="evidence" value="ECO:0007669"/>
    <property type="project" value="UniProtKB-KW"/>
</dbReference>
<dbReference type="GO" id="GO:0000287">
    <property type="term" value="F:magnesium ion binding"/>
    <property type="evidence" value="ECO:0007669"/>
    <property type="project" value="UniProtKB-UniRule"/>
</dbReference>
<dbReference type="GO" id="GO:0006310">
    <property type="term" value="P:DNA recombination"/>
    <property type="evidence" value="ECO:0007669"/>
    <property type="project" value="UniProtKB-UniRule"/>
</dbReference>
<dbReference type="GO" id="GO:0006281">
    <property type="term" value="P:DNA repair"/>
    <property type="evidence" value="ECO:0007669"/>
    <property type="project" value="UniProtKB-UniRule"/>
</dbReference>
<dbReference type="CDD" id="cd16962">
    <property type="entry name" value="RuvC"/>
    <property type="match status" value="1"/>
</dbReference>
<dbReference type="FunFam" id="3.30.420.10:FF:000002">
    <property type="entry name" value="Crossover junction endodeoxyribonuclease RuvC"/>
    <property type="match status" value="1"/>
</dbReference>
<dbReference type="Gene3D" id="3.30.420.10">
    <property type="entry name" value="Ribonuclease H-like superfamily/Ribonuclease H"/>
    <property type="match status" value="1"/>
</dbReference>
<dbReference type="HAMAP" id="MF_00034">
    <property type="entry name" value="RuvC"/>
    <property type="match status" value="1"/>
</dbReference>
<dbReference type="InterPro" id="IPR012337">
    <property type="entry name" value="RNaseH-like_sf"/>
</dbReference>
<dbReference type="InterPro" id="IPR036397">
    <property type="entry name" value="RNaseH_sf"/>
</dbReference>
<dbReference type="InterPro" id="IPR020563">
    <property type="entry name" value="X-over_junc_endoDNase_Mg_BS"/>
</dbReference>
<dbReference type="InterPro" id="IPR002176">
    <property type="entry name" value="X-over_junc_endoDNase_RuvC"/>
</dbReference>
<dbReference type="NCBIfam" id="TIGR00228">
    <property type="entry name" value="ruvC"/>
    <property type="match status" value="1"/>
</dbReference>
<dbReference type="PANTHER" id="PTHR30194">
    <property type="entry name" value="CROSSOVER JUNCTION ENDODEOXYRIBONUCLEASE RUVC"/>
    <property type="match status" value="1"/>
</dbReference>
<dbReference type="PANTHER" id="PTHR30194:SF3">
    <property type="entry name" value="CROSSOVER JUNCTION ENDODEOXYRIBONUCLEASE RUVC"/>
    <property type="match status" value="1"/>
</dbReference>
<dbReference type="Pfam" id="PF02075">
    <property type="entry name" value="RuvC"/>
    <property type="match status" value="1"/>
</dbReference>
<dbReference type="PRINTS" id="PR00696">
    <property type="entry name" value="RSOLVASERUVC"/>
</dbReference>
<dbReference type="SUPFAM" id="SSF53098">
    <property type="entry name" value="Ribonuclease H-like"/>
    <property type="match status" value="1"/>
</dbReference>
<dbReference type="PROSITE" id="PS01321">
    <property type="entry name" value="RUVC"/>
    <property type="match status" value="1"/>
</dbReference>
<gene>
    <name evidence="1" type="primary">ruvC</name>
    <name type="ordered locus">PputGB1_4203</name>
</gene>
<accession>B0KTJ4</accession>
<comment type="function">
    <text evidence="1">The RuvA-RuvB-RuvC complex processes Holliday junction (HJ) DNA during genetic recombination and DNA repair. Endonuclease that resolves HJ intermediates. Cleaves cruciform DNA by making single-stranded nicks across the HJ at symmetrical positions within the homologous arms, yielding a 5'-phosphate and a 3'-hydroxyl group; requires a central core of homology in the junction. The consensus cleavage sequence is 5'-(A/T)TT(C/G)-3'. Cleavage occurs on the 3'-side of the TT dinucleotide at the point of strand exchange. HJ branch migration catalyzed by RuvA-RuvB allows RuvC to scan DNA until it finds its consensus sequence, where it cleaves and resolves the cruciform DNA.</text>
</comment>
<comment type="catalytic activity">
    <reaction evidence="1">
        <text>Endonucleolytic cleavage at a junction such as a reciprocal single-stranded crossover between two homologous DNA duplexes (Holliday junction).</text>
        <dbReference type="EC" id="3.1.21.10"/>
    </reaction>
</comment>
<comment type="cofactor">
    <cofactor evidence="1">
        <name>Mg(2+)</name>
        <dbReference type="ChEBI" id="CHEBI:18420"/>
    </cofactor>
    <text evidence="1">Binds 2 Mg(2+) ion per subunit.</text>
</comment>
<comment type="subunit">
    <text evidence="1">Homodimer which binds Holliday junction (HJ) DNA. The HJ becomes 2-fold symmetrical on binding to RuvC with unstacked arms; it has a different conformation from HJ DNA in complex with RuvA. In the full resolvosome a probable DNA-RuvA(4)-RuvB(12)-RuvC(2) complex forms which resolves the HJ.</text>
</comment>
<comment type="subcellular location">
    <subcellularLocation>
        <location evidence="1">Cytoplasm</location>
    </subcellularLocation>
</comment>
<comment type="similarity">
    <text evidence="1">Belongs to the RuvC family.</text>
</comment>
<name>RUVC_PSEPG</name>
<evidence type="ECO:0000255" key="1">
    <source>
        <dbReference type="HAMAP-Rule" id="MF_00034"/>
    </source>
</evidence>
<keyword id="KW-0963">Cytoplasm</keyword>
<keyword id="KW-0227">DNA damage</keyword>
<keyword id="KW-0233">DNA recombination</keyword>
<keyword id="KW-0234">DNA repair</keyword>
<keyword id="KW-0238">DNA-binding</keyword>
<keyword id="KW-0255">Endonuclease</keyword>
<keyword id="KW-0378">Hydrolase</keyword>
<keyword id="KW-0460">Magnesium</keyword>
<keyword id="KW-0479">Metal-binding</keyword>
<keyword id="KW-0540">Nuclease</keyword>
<reference key="1">
    <citation type="submission" date="2008-01" db="EMBL/GenBank/DDBJ databases">
        <title>Complete sequence of Pseudomonas putida GB-1.</title>
        <authorList>
            <consortium name="US DOE Joint Genome Institute"/>
            <person name="Copeland A."/>
            <person name="Lucas S."/>
            <person name="Lapidus A."/>
            <person name="Barry K."/>
            <person name="Glavina del Rio T."/>
            <person name="Dalin E."/>
            <person name="Tice H."/>
            <person name="Pitluck S."/>
            <person name="Bruce D."/>
            <person name="Goodwin L."/>
            <person name="Chertkov O."/>
            <person name="Brettin T."/>
            <person name="Detter J.C."/>
            <person name="Han C."/>
            <person name="Kuske C.R."/>
            <person name="Schmutz J."/>
            <person name="Larimer F."/>
            <person name="Land M."/>
            <person name="Hauser L."/>
            <person name="Kyrpides N."/>
            <person name="Kim E."/>
            <person name="McCarthy J.K."/>
            <person name="Richardson P."/>
        </authorList>
    </citation>
    <scope>NUCLEOTIDE SEQUENCE [LARGE SCALE GENOMIC DNA]</scope>
    <source>
        <strain>GB-1</strain>
    </source>
</reference>
<proteinExistence type="inferred from homology"/>
<sequence>MTLILGIDPGSRITGYGVVRQTARGCEYVASGCIRTGSGELHERLQIVFRGVSEIIAQHGPVTMGIERVFMARNADSALKLGQARGAAIVAAAEAGLEIAEYSATQVKQAVAGTGGANKEQVMMMVMHLLKLTQKPQIDASDALAIALCHAHTRSSLVPHGLATARRRGGRLRL</sequence>
<organism>
    <name type="scientific">Pseudomonas putida (strain GB-1)</name>
    <dbReference type="NCBI Taxonomy" id="76869"/>
    <lineage>
        <taxon>Bacteria</taxon>
        <taxon>Pseudomonadati</taxon>
        <taxon>Pseudomonadota</taxon>
        <taxon>Gammaproteobacteria</taxon>
        <taxon>Pseudomonadales</taxon>
        <taxon>Pseudomonadaceae</taxon>
        <taxon>Pseudomonas</taxon>
    </lineage>
</organism>
<feature type="chain" id="PRO_1000074494" description="Crossover junction endodeoxyribonuclease RuvC">
    <location>
        <begin position="1"/>
        <end position="174"/>
    </location>
</feature>
<feature type="active site" evidence="1">
    <location>
        <position position="8"/>
    </location>
</feature>
<feature type="active site" evidence="1">
    <location>
        <position position="67"/>
    </location>
</feature>
<feature type="active site" evidence="1">
    <location>
        <position position="139"/>
    </location>
</feature>
<feature type="binding site" evidence="1">
    <location>
        <position position="8"/>
    </location>
    <ligand>
        <name>Mg(2+)</name>
        <dbReference type="ChEBI" id="CHEBI:18420"/>
        <label>1</label>
    </ligand>
</feature>
<feature type="binding site" evidence="1">
    <location>
        <position position="67"/>
    </location>
    <ligand>
        <name>Mg(2+)</name>
        <dbReference type="ChEBI" id="CHEBI:18420"/>
        <label>2</label>
    </ligand>
</feature>
<feature type="binding site" evidence="1">
    <location>
        <position position="139"/>
    </location>
    <ligand>
        <name>Mg(2+)</name>
        <dbReference type="ChEBI" id="CHEBI:18420"/>
        <label>1</label>
    </ligand>
</feature>